<gene>
    <name evidence="1" type="primary">cysS</name>
    <name type="ordered locus">SA0488</name>
</gene>
<organism>
    <name type="scientific">Staphylococcus aureus (strain N315)</name>
    <dbReference type="NCBI Taxonomy" id="158879"/>
    <lineage>
        <taxon>Bacteria</taxon>
        <taxon>Bacillati</taxon>
        <taxon>Bacillota</taxon>
        <taxon>Bacilli</taxon>
        <taxon>Bacillales</taxon>
        <taxon>Staphylococcaceae</taxon>
        <taxon>Staphylococcus</taxon>
    </lineage>
</organism>
<proteinExistence type="evidence at protein level"/>
<reference key="1">
    <citation type="journal article" date="2001" name="Lancet">
        <title>Whole genome sequencing of meticillin-resistant Staphylococcus aureus.</title>
        <authorList>
            <person name="Kuroda M."/>
            <person name="Ohta T."/>
            <person name="Uchiyama I."/>
            <person name="Baba T."/>
            <person name="Yuzawa H."/>
            <person name="Kobayashi I."/>
            <person name="Cui L."/>
            <person name="Oguchi A."/>
            <person name="Aoki K."/>
            <person name="Nagai Y."/>
            <person name="Lian J.-Q."/>
            <person name="Ito T."/>
            <person name="Kanamori M."/>
            <person name="Matsumaru H."/>
            <person name="Maruyama A."/>
            <person name="Murakami H."/>
            <person name="Hosoyama A."/>
            <person name="Mizutani-Ui Y."/>
            <person name="Takahashi N.K."/>
            <person name="Sawano T."/>
            <person name="Inoue R."/>
            <person name="Kaito C."/>
            <person name="Sekimizu K."/>
            <person name="Hirakawa H."/>
            <person name="Kuhara S."/>
            <person name="Goto S."/>
            <person name="Yabuzaki J."/>
            <person name="Kanehisa M."/>
            <person name="Yamashita A."/>
            <person name="Oshima K."/>
            <person name="Furuya K."/>
            <person name="Yoshino C."/>
            <person name="Shiba T."/>
            <person name="Hattori M."/>
            <person name="Ogasawara N."/>
            <person name="Hayashi H."/>
            <person name="Hiramatsu K."/>
        </authorList>
    </citation>
    <scope>NUCLEOTIDE SEQUENCE [LARGE SCALE GENOMIC DNA]</scope>
    <source>
        <strain>N315</strain>
    </source>
</reference>
<reference key="2">
    <citation type="journal article" date="2005" name="J. Microbiol. Methods">
        <title>Correlation of proteomic and transcriptomic profiles of Staphylococcus aureus during the post-exponential phase of growth.</title>
        <authorList>
            <person name="Scherl A."/>
            <person name="Francois P."/>
            <person name="Bento M."/>
            <person name="Deshusses J.M."/>
            <person name="Charbonnier Y."/>
            <person name="Converset V."/>
            <person name="Huyghe A."/>
            <person name="Walter N."/>
            <person name="Hoogland C."/>
            <person name="Appel R.D."/>
            <person name="Sanchez J.-C."/>
            <person name="Zimmermann-Ivol C.G."/>
            <person name="Corthals G.L."/>
            <person name="Hochstrasser D.F."/>
            <person name="Schrenzel J."/>
        </authorList>
    </citation>
    <scope>IDENTIFICATION BY MASS SPECTROMETRY</scope>
    <source>
        <strain>N315</strain>
    </source>
</reference>
<reference key="3">
    <citation type="submission" date="2007-10" db="UniProtKB">
        <title>Shotgun proteomic analysis of total and membrane protein extracts of S. aureus strain N315.</title>
        <authorList>
            <person name="Vaezzadeh A.R."/>
            <person name="Deshusses J."/>
            <person name="Lescuyer P."/>
            <person name="Hochstrasser D.F."/>
        </authorList>
    </citation>
    <scope>IDENTIFICATION BY MASS SPECTROMETRY [LARGE SCALE ANALYSIS]</scope>
    <source>
        <strain>N315</strain>
    </source>
</reference>
<accession>Q99W73</accession>
<evidence type="ECO:0000255" key="1">
    <source>
        <dbReference type="HAMAP-Rule" id="MF_00041"/>
    </source>
</evidence>
<name>SYC_STAAN</name>
<comment type="catalytic activity">
    <reaction evidence="1">
        <text>tRNA(Cys) + L-cysteine + ATP = L-cysteinyl-tRNA(Cys) + AMP + diphosphate</text>
        <dbReference type="Rhea" id="RHEA:17773"/>
        <dbReference type="Rhea" id="RHEA-COMP:9661"/>
        <dbReference type="Rhea" id="RHEA-COMP:9679"/>
        <dbReference type="ChEBI" id="CHEBI:30616"/>
        <dbReference type="ChEBI" id="CHEBI:33019"/>
        <dbReference type="ChEBI" id="CHEBI:35235"/>
        <dbReference type="ChEBI" id="CHEBI:78442"/>
        <dbReference type="ChEBI" id="CHEBI:78517"/>
        <dbReference type="ChEBI" id="CHEBI:456215"/>
        <dbReference type="EC" id="6.1.1.16"/>
    </reaction>
</comment>
<comment type="cofactor">
    <cofactor evidence="1">
        <name>Zn(2+)</name>
        <dbReference type="ChEBI" id="CHEBI:29105"/>
    </cofactor>
    <text evidence="1">Binds 1 zinc ion per subunit.</text>
</comment>
<comment type="subunit">
    <text evidence="1">Monomer.</text>
</comment>
<comment type="subcellular location">
    <subcellularLocation>
        <location evidence="1">Cytoplasm</location>
    </subcellularLocation>
</comment>
<comment type="similarity">
    <text evidence="1">Belongs to the class-I aminoacyl-tRNA synthetase family.</text>
</comment>
<keyword id="KW-0030">Aminoacyl-tRNA synthetase</keyword>
<keyword id="KW-0067">ATP-binding</keyword>
<keyword id="KW-0963">Cytoplasm</keyword>
<keyword id="KW-0436">Ligase</keyword>
<keyword id="KW-0479">Metal-binding</keyword>
<keyword id="KW-0547">Nucleotide-binding</keyword>
<keyword id="KW-0648">Protein biosynthesis</keyword>
<keyword id="KW-0862">Zinc</keyword>
<sequence length="466" mass="53684">MITLYNTLTRQKEVFKPIEPGKVKMYVCGPTVYNYIHIGNARPAINYDVVRRYFEYQGYNVEYVSNFTDVDDKLIKRSQELNQSVPEIAEKYIAAFHEDVGALNVRKATSNPRVMDHMDDIIQFIKDLVDQGYAYESGGDVYFRTRKFEGYGKLSHQSIDDLKVGARIDAGEHKEDALDFTLWKKAKPGEISWNSPFGEGRPGWHIECSVMAFHELGPTIDIHAGGSDLQFPHHENEIAQSEAHNHAPFANYWMHNGFINIDNEKMSKSLGNFILVHDIIKEVDPDVLRFFMISVHYRSPINYNLELVESARSGLERIRNSYQLIEERAQIATNIENQQTYIDQIDAILNRFETVMNDDFNTANAITAWYDLAKLANKYVLENTTSTEVIDKFKAVYQIFSDVLGVPLKSKNADELLDEDVEKLIEERNEARKNKDFARADEIRDMLKSQNIILEDTPQGVRFKRG</sequence>
<feature type="chain" id="PRO_0000159479" description="Cysteine--tRNA ligase">
    <location>
        <begin position="1"/>
        <end position="466"/>
    </location>
</feature>
<feature type="short sequence motif" description="'HIGH' region">
    <location>
        <begin position="30"/>
        <end position="40"/>
    </location>
</feature>
<feature type="short sequence motif" description="'KMSKS' region">
    <location>
        <begin position="265"/>
        <end position="269"/>
    </location>
</feature>
<feature type="binding site" evidence="1">
    <location>
        <position position="28"/>
    </location>
    <ligand>
        <name>Zn(2+)</name>
        <dbReference type="ChEBI" id="CHEBI:29105"/>
    </ligand>
</feature>
<feature type="binding site" evidence="1">
    <location>
        <position position="208"/>
    </location>
    <ligand>
        <name>Zn(2+)</name>
        <dbReference type="ChEBI" id="CHEBI:29105"/>
    </ligand>
</feature>
<feature type="binding site" evidence="1">
    <location>
        <position position="233"/>
    </location>
    <ligand>
        <name>Zn(2+)</name>
        <dbReference type="ChEBI" id="CHEBI:29105"/>
    </ligand>
</feature>
<feature type="binding site" evidence="1">
    <location>
        <position position="237"/>
    </location>
    <ligand>
        <name>Zn(2+)</name>
        <dbReference type="ChEBI" id="CHEBI:29105"/>
    </ligand>
</feature>
<feature type="binding site" evidence="1">
    <location>
        <position position="268"/>
    </location>
    <ligand>
        <name>ATP</name>
        <dbReference type="ChEBI" id="CHEBI:30616"/>
    </ligand>
</feature>
<protein>
    <recommendedName>
        <fullName evidence="1">Cysteine--tRNA ligase</fullName>
        <ecNumber evidence="1">6.1.1.16</ecNumber>
    </recommendedName>
    <alternativeName>
        <fullName evidence="1">Cysteinyl-tRNA synthetase</fullName>
        <shortName evidence="1">CysRS</shortName>
    </alternativeName>
</protein>
<dbReference type="EC" id="6.1.1.16" evidence="1"/>
<dbReference type="EMBL" id="BA000018">
    <property type="protein sequence ID" value="BAB41718.1"/>
    <property type="molecule type" value="Genomic_DNA"/>
</dbReference>
<dbReference type="PIR" id="C89820">
    <property type="entry name" value="C89820"/>
</dbReference>
<dbReference type="RefSeq" id="WP_000631969.1">
    <property type="nucleotide sequence ID" value="NC_002745.2"/>
</dbReference>
<dbReference type="SMR" id="Q99W73"/>
<dbReference type="EnsemblBacteria" id="BAB41718">
    <property type="protein sequence ID" value="BAB41718"/>
    <property type="gene ID" value="BAB41718"/>
</dbReference>
<dbReference type="KEGG" id="sau:SA0488"/>
<dbReference type="HOGENOM" id="CLU_013528_0_1_9"/>
<dbReference type="GO" id="GO:0005829">
    <property type="term" value="C:cytosol"/>
    <property type="evidence" value="ECO:0007669"/>
    <property type="project" value="TreeGrafter"/>
</dbReference>
<dbReference type="GO" id="GO:0005524">
    <property type="term" value="F:ATP binding"/>
    <property type="evidence" value="ECO:0007669"/>
    <property type="project" value="UniProtKB-UniRule"/>
</dbReference>
<dbReference type="GO" id="GO:0004817">
    <property type="term" value="F:cysteine-tRNA ligase activity"/>
    <property type="evidence" value="ECO:0007669"/>
    <property type="project" value="UniProtKB-UniRule"/>
</dbReference>
<dbReference type="GO" id="GO:0008270">
    <property type="term" value="F:zinc ion binding"/>
    <property type="evidence" value="ECO:0007669"/>
    <property type="project" value="UniProtKB-UniRule"/>
</dbReference>
<dbReference type="GO" id="GO:0006423">
    <property type="term" value="P:cysteinyl-tRNA aminoacylation"/>
    <property type="evidence" value="ECO:0007669"/>
    <property type="project" value="UniProtKB-UniRule"/>
</dbReference>
<dbReference type="CDD" id="cd00672">
    <property type="entry name" value="CysRS_core"/>
    <property type="match status" value="1"/>
</dbReference>
<dbReference type="FunFam" id="1.20.120.1910:FF:000002">
    <property type="entry name" value="Cysteine--tRNA ligase"/>
    <property type="match status" value="1"/>
</dbReference>
<dbReference type="FunFam" id="3.40.50.620:FF:000009">
    <property type="entry name" value="Cysteine--tRNA ligase"/>
    <property type="match status" value="1"/>
</dbReference>
<dbReference type="Gene3D" id="1.20.120.1910">
    <property type="entry name" value="Cysteine-tRNA ligase, C-terminal anti-codon recognition domain"/>
    <property type="match status" value="1"/>
</dbReference>
<dbReference type="Gene3D" id="3.40.50.620">
    <property type="entry name" value="HUPs"/>
    <property type="match status" value="1"/>
</dbReference>
<dbReference type="HAMAP" id="MF_00041">
    <property type="entry name" value="Cys_tRNA_synth"/>
    <property type="match status" value="1"/>
</dbReference>
<dbReference type="InterPro" id="IPR015803">
    <property type="entry name" value="Cys-tRNA-ligase"/>
</dbReference>
<dbReference type="InterPro" id="IPR015273">
    <property type="entry name" value="Cys-tRNA-synt_Ia_DALR"/>
</dbReference>
<dbReference type="InterPro" id="IPR024909">
    <property type="entry name" value="Cys-tRNA/MSH_ligase"/>
</dbReference>
<dbReference type="InterPro" id="IPR056411">
    <property type="entry name" value="CysS_C"/>
</dbReference>
<dbReference type="InterPro" id="IPR014729">
    <property type="entry name" value="Rossmann-like_a/b/a_fold"/>
</dbReference>
<dbReference type="InterPro" id="IPR032678">
    <property type="entry name" value="tRNA-synt_1_cat_dom"/>
</dbReference>
<dbReference type="InterPro" id="IPR009080">
    <property type="entry name" value="tRNAsynth_Ia_anticodon-bd"/>
</dbReference>
<dbReference type="NCBIfam" id="TIGR00435">
    <property type="entry name" value="cysS"/>
    <property type="match status" value="1"/>
</dbReference>
<dbReference type="PANTHER" id="PTHR10890:SF3">
    <property type="entry name" value="CYSTEINE--TRNA LIGASE, CYTOPLASMIC"/>
    <property type="match status" value="1"/>
</dbReference>
<dbReference type="PANTHER" id="PTHR10890">
    <property type="entry name" value="CYSTEINYL-TRNA SYNTHETASE"/>
    <property type="match status" value="1"/>
</dbReference>
<dbReference type="Pfam" id="PF23493">
    <property type="entry name" value="CysS_C"/>
    <property type="match status" value="1"/>
</dbReference>
<dbReference type="Pfam" id="PF09190">
    <property type="entry name" value="DALR_2"/>
    <property type="match status" value="1"/>
</dbReference>
<dbReference type="Pfam" id="PF01406">
    <property type="entry name" value="tRNA-synt_1e"/>
    <property type="match status" value="1"/>
</dbReference>
<dbReference type="PRINTS" id="PR00983">
    <property type="entry name" value="TRNASYNTHCYS"/>
</dbReference>
<dbReference type="SMART" id="SM00840">
    <property type="entry name" value="DALR_2"/>
    <property type="match status" value="1"/>
</dbReference>
<dbReference type="SUPFAM" id="SSF47323">
    <property type="entry name" value="Anticodon-binding domain of a subclass of class I aminoacyl-tRNA synthetases"/>
    <property type="match status" value="1"/>
</dbReference>
<dbReference type="SUPFAM" id="SSF52374">
    <property type="entry name" value="Nucleotidylyl transferase"/>
    <property type="match status" value="1"/>
</dbReference>